<gene>
    <name type="primary">TMEM278</name>
    <name type="synonym">TMEM88B</name>
</gene>
<evidence type="ECO:0000255" key="1"/>
<evidence type="ECO:0000256" key="2">
    <source>
        <dbReference type="SAM" id="MobiDB-lite"/>
    </source>
</evidence>
<evidence type="ECO:0000305" key="3"/>
<dbReference type="EMBL" id="BC119848">
    <property type="protein sequence ID" value="AAI19849.1"/>
    <property type="molecule type" value="mRNA"/>
</dbReference>
<dbReference type="RefSeq" id="NP_001070426.1">
    <property type="nucleotide sequence ID" value="NM_001076958.1"/>
</dbReference>
<dbReference type="SMR" id="Q0VD38"/>
<dbReference type="FunCoup" id="Q0VD38">
    <property type="interactions" value="7"/>
</dbReference>
<dbReference type="STRING" id="9913.ENSBTAP00000042400"/>
<dbReference type="PaxDb" id="9913-ENSBTAP00000042400"/>
<dbReference type="Ensembl" id="ENSBTAT00000044963.2">
    <property type="protein sequence ID" value="ENSBTAP00000042400.1"/>
    <property type="gene ID" value="ENSBTAG00000023784.3"/>
</dbReference>
<dbReference type="GeneID" id="767837"/>
<dbReference type="KEGG" id="bta:767837"/>
<dbReference type="CTD" id="643965"/>
<dbReference type="VEuPathDB" id="HostDB:ENSBTAG00000023784"/>
<dbReference type="VGNC" id="VGNC:36121">
    <property type="gene designation" value="TMEM88B"/>
</dbReference>
<dbReference type="eggNOG" id="ENOG502RYZS">
    <property type="taxonomic scope" value="Eukaryota"/>
</dbReference>
<dbReference type="GeneTree" id="ENSGT00730000111599"/>
<dbReference type="HOGENOM" id="CLU_1602208_0_0_1"/>
<dbReference type="InParanoid" id="Q0VD38"/>
<dbReference type="OMA" id="EEQLCAW"/>
<dbReference type="OrthoDB" id="9948320at2759"/>
<dbReference type="TreeFam" id="TF332743"/>
<dbReference type="Proteomes" id="UP000009136">
    <property type="component" value="Chromosome 16"/>
</dbReference>
<dbReference type="Bgee" id="ENSBTAG00000023784">
    <property type="expression patterns" value="Expressed in midbrain and 64 other cell types or tissues"/>
</dbReference>
<dbReference type="GO" id="GO:0005886">
    <property type="term" value="C:plasma membrane"/>
    <property type="evidence" value="ECO:0000318"/>
    <property type="project" value="GO_Central"/>
</dbReference>
<dbReference type="GO" id="GO:0090090">
    <property type="term" value="P:negative regulation of canonical Wnt signaling pathway"/>
    <property type="evidence" value="ECO:0000318"/>
    <property type="project" value="GO_Central"/>
</dbReference>
<dbReference type="InterPro" id="IPR033355">
    <property type="entry name" value="TMEM88"/>
</dbReference>
<dbReference type="PANTHER" id="PTHR28628">
    <property type="entry name" value="TRANSMEMBRANE PROTEIN 88-RELATED"/>
    <property type="match status" value="1"/>
</dbReference>
<dbReference type="PANTHER" id="PTHR28628:SF2">
    <property type="entry name" value="TRANSMEMBRANE PROTEIN 88B"/>
    <property type="match status" value="1"/>
</dbReference>
<comment type="subcellular location">
    <subcellularLocation>
        <location evidence="3">Membrane</location>
        <topology evidence="3">Multi-pass membrane protein</topology>
    </subcellularLocation>
</comment>
<comment type="similarity">
    <text evidence="3">Belongs to the TMEM88 family.</text>
</comment>
<sequence>MSDQERETEEDEGGDPSDTAPMLPQRLPDHQASDLMSPGWASLAARGLGTLLFQGWALARLLLHLLLPAAVFLLVLLPAAAVVYLGFLCHSRVHPAPRPACRALLSDRGSAAVIVLGFLSLPPLLVLASAARARLARRLHSLLPPPTWSPGPHRQSDGEKQLCAWV</sequence>
<name>TM278_BOVIN</name>
<organism>
    <name type="scientific">Bos taurus</name>
    <name type="common">Bovine</name>
    <dbReference type="NCBI Taxonomy" id="9913"/>
    <lineage>
        <taxon>Eukaryota</taxon>
        <taxon>Metazoa</taxon>
        <taxon>Chordata</taxon>
        <taxon>Craniata</taxon>
        <taxon>Vertebrata</taxon>
        <taxon>Euteleostomi</taxon>
        <taxon>Mammalia</taxon>
        <taxon>Eutheria</taxon>
        <taxon>Laurasiatheria</taxon>
        <taxon>Artiodactyla</taxon>
        <taxon>Ruminantia</taxon>
        <taxon>Pecora</taxon>
        <taxon>Bovidae</taxon>
        <taxon>Bovinae</taxon>
        <taxon>Bos</taxon>
    </lineage>
</organism>
<protein>
    <recommendedName>
        <fullName>Transmembrane protein 278</fullName>
    </recommendedName>
    <alternativeName>
        <fullName>Transmembrane protein 88B</fullName>
    </alternativeName>
</protein>
<feature type="chain" id="PRO_0000346445" description="Transmembrane protein 278">
    <location>
        <begin position="1"/>
        <end position="166"/>
    </location>
</feature>
<feature type="transmembrane region" description="Helical" evidence="1">
    <location>
        <begin position="39"/>
        <end position="59"/>
    </location>
</feature>
<feature type="transmembrane region" description="Helical" evidence="1">
    <location>
        <begin position="65"/>
        <end position="85"/>
    </location>
</feature>
<feature type="transmembrane region" description="Helical" evidence="1">
    <location>
        <begin position="111"/>
        <end position="131"/>
    </location>
</feature>
<feature type="region of interest" description="Disordered" evidence="2">
    <location>
        <begin position="1"/>
        <end position="28"/>
    </location>
</feature>
<feature type="compositionally biased region" description="Acidic residues" evidence="2">
    <location>
        <begin position="1"/>
        <end position="15"/>
    </location>
</feature>
<keyword id="KW-0472">Membrane</keyword>
<keyword id="KW-1185">Reference proteome</keyword>
<keyword id="KW-0812">Transmembrane</keyword>
<keyword id="KW-1133">Transmembrane helix</keyword>
<reference key="1">
    <citation type="submission" date="2006-08" db="EMBL/GenBank/DDBJ databases">
        <authorList>
            <consortium name="NIH - Mammalian Gene Collection (MGC) project"/>
        </authorList>
    </citation>
    <scope>NUCLEOTIDE SEQUENCE [LARGE SCALE MRNA]</scope>
    <source>
        <strain>Hereford</strain>
        <tissue>Thalamus</tissue>
    </source>
</reference>
<accession>Q0VD38</accession>
<proteinExistence type="evidence at transcript level"/>